<accession>B4S5N0</accession>
<organism>
    <name type="scientific">Prosthecochloris aestuarii (strain DSM 271 / SK 413)</name>
    <dbReference type="NCBI Taxonomy" id="290512"/>
    <lineage>
        <taxon>Bacteria</taxon>
        <taxon>Pseudomonadati</taxon>
        <taxon>Chlorobiota</taxon>
        <taxon>Chlorobiia</taxon>
        <taxon>Chlorobiales</taxon>
        <taxon>Chlorobiaceae</taxon>
        <taxon>Prosthecochloris</taxon>
    </lineage>
</organism>
<proteinExistence type="inferred from homology"/>
<feature type="chain" id="PRO_1000091748" description="Elongation factor G">
    <location>
        <begin position="1"/>
        <end position="704"/>
    </location>
</feature>
<feature type="domain" description="tr-type G">
    <location>
        <begin position="8"/>
        <end position="291"/>
    </location>
</feature>
<feature type="binding site" evidence="1">
    <location>
        <begin position="17"/>
        <end position="24"/>
    </location>
    <ligand>
        <name>GTP</name>
        <dbReference type="ChEBI" id="CHEBI:37565"/>
    </ligand>
</feature>
<feature type="binding site" evidence="1">
    <location>
        <begin position="90"/>
        <end position="94"/>
    </location>
    <ligand>
        <name>GTP</name>
        <dbReference type="ChEBI" id="CHEBI:37565"/>
    </ligand>
</feature>
<feature type="binding site" evidence="1">
    <location>
        <begin position="144"/>
        <end position="147"/>
    </location>
    <ligand>
        <name>GTP</name>
        <dbReference type="ChEBI" id="CHEBI:37565"/>
    </ligand>
</feature>
<evidence type="ECO:0000255" key="1">
    <source>
        <dbReference type="HAMAP-Rule" id="MF_00054"/>
    </source>
</evidence>
<protein>
    <recommendedName>
        <fullName evidence="1">Elongation factor G</fullName>
        <shortName evidence="1">EF-G</shortName>
    </recommendedName>
</protein>
<gene>
    <name evidence="1" type="primary">fusA</name>
    <name type="ordered locus">Paes_2067</name>
</gene>
<sequence>MARQVGLDKVRNIGIMAHIDAGKTTTTERILYYTGRLHKMGEVHDGGATMDWMEQEKERGITITSAATTCFWEPRYGIYKGKNHRINIIDTPGHVDFTVEVERSLRVLDGAVALFCAVGGVEPQSETVWRQANKYNVPRVAYVNKMDRVGADFFETVKSIKERLGANPVPVQIPIGQGEMFAGVVDLIRMKGIIYDKEDGSTYEEVAIPHDLESEAKHWRINMLEAVSEVDETLLEKYLEGEDITEDEVRKVLRQATLAGTIIPTLCGSSFKNKGVQFMLDTVVECLPSPVDVGNVAGHHPDTDEDIVREPKDEAPFAGLAFKIATDPFVGKLTFFRVYSGVLKAGSYILNSTTGKKERIGRLLQMHSNKREDLTEVHAGDIAAAVGMKDVKTGDTMCDEAKPIILEKMVFPEPVIQIAIEPKTKADSDKLGMSLAKLAEEDPTFRVSSDEETGQTLIAGMGELHLEVLVDRLKREFKVEANVGQPQVAYRETIKKAVDHEGKFVRQSGGKGQFGLVNLKVEPLEQGKGYEFVDAIKGGVIPKEYIPAVSNGIQEAMKDGVIAGYPVQDVKVTLYDGKYHDVDSSEMAFKIAGSIGFKGAVRKADPVLLEPLMKVEVITPEEYLGDVMGDLSSRRGHIEGMGDRAGAQFVKAKVPLSEMFGYSTVLRSMTQGRANYTMEFEQYHEVPKNIAEALQEKNSAKNAD</sequence>
<comment type="function">
    <text evidence="1">Catalyzes the GTP-dependent ribosomal translocation step during translation elongation. During this step, the ribosome changes from the pre-translocational (PRE) to the post-translocational (POST) state as the newly formed A-site-bound peptidyl-tRNA and P-site-bound deacylated tRNA move to the P and E sites, respectively. Catalyzes the coordinated movement of the two tRNA molecules, the mRNA and conformational changes in the ribosome.</text>
</comment>
<comment type="subcellular location">
    <subcellularLocation>
        <location evidence="1">Cytoplasm</location>
    </subcellularLocation>
</comment>
<comment type="similarity">
    <text evidence="1">Belongs to the TRAFAC class translation factor GTPase superfamily. Classic translation factor GTPase family. EF-G/EF-2 subfamily.</text>
</comment>
<name>EFG_PROA2</name>
<keyword id="KW-0963">Cytoplasm</keyword>
<keyword id="KW-0251">Elongation factor</keyword>
<keyword id="KW-0342">GTP-binding</keyword>
<keyword id="KW-0547">Nucleotide-binding</keyword>
<keyword id="KW-0648">Protein biosynthesis</keyword>
<dbReference type="EMBL" id="CP001108">
    <property type="protein sequence ID" value="ACF47077.1"/>
    <property type="molecule type" value="Genomic_DNA"/>
</dbReference>
<dbReference type="RefSeq" id="WP_012506609.1">
    <property type="nucleotide sequence ID" value="NC_011059.1"/>
</dbReference>
<dbReference type="SMR" id="B4S5N0"/>
<dbReference type="STRING" id="290512.Paes_2067"/>
<dbReference type="KEGG" id="paa:Paes_2067"/>
<dbReference type="eggNOG" id="COG0480">
    <property type="taxonomic scope" value="Bacteria"/>
</dbReference>
<dbReference type="HOGENOM" id="CLU_002794_4_1_10"/>
<dbReference type="Proteomes" id="UP000002725">
    <property type="component" value="Chromosome"/>
</dbReference>
<dbReference type="GO" id="GO:0005737">
    <property type="term" value="C:cytoplasm"/>
    <property type="evidence" value="ECO:0007669"/>
    <property type="project" value="UniProtKB-SubCell"/>
</dbReference>
<dbReference type="GO" id="GO:0005525">
    <property type="term" value="F:GTP binding"/>
    <property type="evidence" value="ECO:0007669"/>
    <property type="project" value="UniProtKB-UniRule"/>
</dbReference>
<dbReference type="GO" id="GO:0003924">
    <property type="term" value="F:GTPase activity"/>
    <property type="evidence" value="ECO:0007669"/>
    <property type="project" value="InterPro"/>
</dbReference>
<dbReference type="GO" id="GO:0003746">
    <property type="term" value="F:translation elongation factor activity"/>
    <property type="evidence" value="ECO:0007669"/>
    <property type="project" value="UniProtKB-UniRule"/>
</dbReference>
<dbReference type="GO" id="GO:0032790">
    <property type="term" value="P:ribosome disassembly"/>
    <property type="evidence" value="ECO:0007669"/>
    <property type="project" value="TreeGrafter"/>
</dbReference>
<dbReference type="CDD" id="cd01886">
    <property type="entry name" value="EF-G"/>
    <property type="match status" value="1"/>
</dbReference>
<dbReference type="CDD" id="cd16262">
    <property type="entry name" value="EFG_III"/>
    <property type="match status" value="1"/>
</dbReference>
<dbReference type="CDD" id="cd01434">
    <property type="entry name" value="EFG_mtEFG1_IV"/>
    <property type="match status" value="1"/>
</dbReference>
<dbReference type="CDD" id="cd03713">
    <property type="entry name" value="EFG_mtEFG_C"/>
    <property type="match status" value="1"/>
</dbReference>
<dbReference type="CDD" id="cd04088">
    <property type="entry name" value="EFG_mtEFG_II"/>
    <property type="match status" value="1"/>
</dbReference>
<dbReference type="FunFam" id="2.40.30.10:FF:000006">
    <property type="entry name" value="Elongation factor G"/>
    <property type="match status" value="1"/>
</dbReference>
<dbReference type="FunFam" id="3.30.230.10:FF:000003">
    <property type="entry name" value="Elongation factor G"/>
    <property type="match status" value="1"/>
</dbReference>
<dbReference type="FunFam" id="3.30.70.240:FF:000001">
    <property type="entry name" value="Elongation factor G"/>
    <property type="match status" value="1"/>
</dbReference>
<dbReference type="FunFam" id="3.30.70.870:FF:000001">
    <property type="entry name" value="Elongation factor G"/>
    <property type="match status" value="1"/>
</dbReference>
<dbReference type="FunFam" id="3.40.50.300:FF:000029">
    <property type="entry name" value="Elongation factor G"/>
    <property type="match status" value="1"/>
</dbReference>
<dbReference type="Gene3D" id="3.30.230.10">
    <property type="match status" value="1"/>
</dbReference>
<dbReference type="Gene3D" id="3.30.70.240">
    <property type="match status" value="1"/>
</dbReference>
<dbReference type="Gene3D" id="3.30.70.870">
    <property type="entry name" value="Elongation Factor G (Translational Gtpase), domain 3"/>
    <property type="match status" value="1"/>
</dbReference>
<dbReference type="Gene3D" id="3.40.50.300">
    <property type="entry name" value="P-loop containing nucleotide triphosphate hydrolases"/>
    <property type="match status" value="1"/>
</dbReference>
<dbReference type="Gene3D" id="2.40.30.10">
    <property type="entry name" value="Translation factors"/>
    <property type="match status" value="1"/>
</dbReference>
<dbReference type="HAMAP" id="MF_00054_B">
    <property type="entry name" value="EF_G_EF_2_B"/>
    <property type="match status" value="1"/>
</dbReference>
<dbReference type="InterPro" id="IPR041095">
    <property type="entry name" value="EFG_II"/>
</dbReference>
<dbReference type="InterPro" id="IPR009022">
    <property type="entry name" value="EFG_III"/>
</dbReference>
<dbReference type="InterPro" id="IPR035647">
    <property type="entry name" value="EFG_III/V"/>
</dbReference>
<dbReference type="InterPro" id="IPR047872">
    <property type="entry name" value="EFG_IV"/>
</dbReference>
<dbReference type="InterPro" id="IPR035649">
    <property type="entry name" value="EFG_V"/>
</dbReference>
<dbReference type="InterPro" id="IPR000640">
    <property type="entry name" value="EFG_V-like"/>
</dbReference>
<dbReference type="InterPro" id="IPR004161">
    <property type="entry name" value="EFTu-like_2"/>
</dbReference>
<dbReference type="InterPro" id="IPR031157">
    <property type="entry name" value="G_TR_CS"/>
</dbReference>
<dbReference type="InterPro" id="IPR027417">
    <property type="entry name" value="P-loop_NTPase"/>
</dbReference>
<dbReference type="InterPro" id="IPR020568">
    <property type="entry name" value="Ribosomal_Su5_D2-typ_SF"/>
</dbReference>
<dbReference type="InterPro" id="IPR014721">
    <property type="entry name" value="Ribsml_uS5_D2-typ_fold_subgr"/>
</dbReference>
<dbReference type="InterPro" id="IPR005225">
    <property type="entry name" value="Small_GTP-bd"/>
</dbReference>
<dbReference type="InterPro" id="IPR000795">
    <property type="entry name" value="T_Tr_GTP-bd_dom"/>
</dbReference>
<dbReference type="InterPro" id="IPR009000">
    <property type="entry name" value="Transl_B-barrel_sf"/>
</dbReference>
<dbReference type="InterPro" id="IPR004540">
    <property type="entry name" value="Transl_elong_EFG/EF2"/>
</dbReference>
<dbReference type="InterPro" id="IPR005517">
    <property type="entry name" value="Transl_elong_EFG/EF2_IV"/>
</dbReference>
<dbReference type="NCBIfam" id="TIGR00484">
    <property type="entry name" value="EF-G"/>
    <property type="match status" value="1"/>
</dbReference>
<dbReference type="NCBIfam" id="NF009379">
    <property type="entry name" value="PRK12740.1-3"/>
    <property type="match status" value="1"/>
</dbReference>
<dbReference type="NCBIfam" id="NF009381">
    <property type="entry name" value="PRK12740.1-5"/>
    <property type="match status" value="1"/>
</dbReference>
<dbReference type="NCBIfam" id="TIGR00231">
    <property type="entry name" value="small_GTP"/>
    <property type="match status" value="1"/>
</dbReference>
<dbReference type="PANTHER" id="PTHR43261:SF1">
    <property type="entry name" value="RIBOSOME-RELEASING FACTOR 2, MITOCHONDRIAL"/>
    <property type="match status" value="1"/>
</dbReference>
<dbReference type="PANTHER" id="PTHR43261">
    <property type="entry name" value="TRANSLATION ELONGATION FACTOR G-RELATED"/>
    <property type="match status" value="1"/>
</dbReference>
<dbReference type="Pfam" id="PF00679">
    <property type="entry name" value="EFG_C"/>
    <property type="match status" value="1"/>
</dbReference>
<dbReference type="Pfam" id="PF14492">
    <property type="entry name" value="EFG_III"/>
    <property type="match status" value="1"/>
</dbReference>
<dbReference type="Pfam" id="PF03764">
    <property type="entry name" value="EFG_IV"/>
    <property type="match status" value="1"/>
</dbReference>
<dbReference type="Pfam" id="PF00009">
    <property type="entry name" value="GTP_EFTU"/>
    <property type="match status" value="1"/>
</dbReference>
<dbReference type="Pfam" id="PF03144">
    <property type="entry name" value="GTP_EFTU_D2"/>
    <property type="match status" value="1"/>
</dbReference>
<dbReference type="PRINTS" id="PR00315">
    <property type="entry name" value="ELONGATNFCT"/>
</dbReference>
<dbReference type="SMART" id="SM00838">
    <property type="entry name" value="EFG_C"/>
    <property type="match status" value="1"/>
</dbReference>
<dbReference type="SMART" id="SM00889">
    <property type="entry name" value="EFG_IV"/>
    <property type="match status" value="1"/>
</dbReference>
<dbReference type="SUPFAM" id="SSF54980">
    <property type="entry name" value="EF-G C-terminal domain-like"/>
    <property type="match status" value="2"/>
</dbReference>
<dbReference type="SUPFAM" id="SSF52540">
    <property type="entry name" value="P-loop containing nucleoside triphosphate hydrolases"/>
    <property type="match status" value="1"/>
</dbReference>
<dbReference type="SUPFAM" id="SSF54211">
    <property type="entry name" value="Ribosomal protein S5 domain 2-like"/>
    <property type="match status" value="1"/>
</dbReference>
<dbReference type="SUPFAM" id="SSF50447">
    <property type="entry name" value="Translation proteins"/>
    <property type="match status" value="1"/>
</dbReference>
<dbReference type="PROSITE" id="PS00301">
    <property type="entry name" value="G_TR_1"/>
    <property type="match status" value="1"/>
</dbReference>
<dbReference type="PROSITE" id="PS51722">
    <property type="entry name" value="G_TR_2"/>
    <property type="match status" value="1"/>
</dbReference>
<reference key="1">
    <citation type="submission" date="2008-06" db="EMBL/GenBank/DDBJ databases">
        <title>Complete sequence of chromosome of Prosthecochloris aestuarii DSM 271.</title>
        <authorList>
            <consortium name="US DOE Joint Genome Institute"/>
            <person name="Lucas S."/>
            <person name="Copeland A."/>
            <person name="Lapidus A."/>
            <person name="Glavina del Rio T."/>
            <person name="Dalin E."/>
            <person name="Tice H."/>
            <person name="Bruce D."/>
            <person name="Goodwin L."/>
            <person name="Pitluck S."/>
            <person name="Schmutz J."/>
            <person name="Larimer F."/>
            <person name="Land M."/>
            <person name="Hauser L."/>
            <person name="Kyrpides N."/>
            <person name="Anderson I."/>
            <person name="Liu Z."/>
            <person name="Li T."/>
            <person name="Zhao F."/>
            <person name="Overmann J."/>
            <person name="Bryant D.A."/>
            <person name="Richardson P."/>
        </authorList>
    </citation>
    <scope>NUCLEOTIDE SEQUENCE [LARGE SCALE GENOMIC DNA]</scope>
    <source>
        <strain>DSM 271 / SK 413</strain>
    </source>
</reference>